<keyword id="KW-0028">Amino-acid biosynthesis</keyword>
<keyword id="KW-0963">Cytoplasm</keyword>
<keyword id="KW-0413">Isomerase</keyword>
<keyword id="KW-0457">Lysine biosynthesis</keyword>
<sequence>MKTPFSKMNGLGNKIIVADLRKAIHNITPQAIQALASNPQTHFDQIMAIHPPTQDADFRIEIWNADGSMAKACGNGTRCVIEWLANHNLGNNFRLETSTGIVEGKRQTDGLISVDMGRPYLNAKDMPVSREIIDTNHVDITAGPLQDACLVSVGNLHAIFFIESNIQNIPLEKYGPKLEHDPLFPERCNISIAQITSKKSLTLRTWERGAGLTQACGSAACASAVAAYRRGLTERHIDVNLPKGILSILYRDDEHIIMTGPTEHEFSGLFNPLTGTYKKDHL</sequence>
<accession>A1UQV5</accession>
<feature type="chain" id="PRO_1000011845" description="Diaminopimelate epimerase">
    <location>
        <begin position="1"/>
        <end position="282"/>
    </location>
</feature>
<feature type="active site" description="Proton donor" evidence="1">
    <location>
        <position position="73"/>
    </location>
</feature>
<feature type="active site" description="Proton acceptor" evidence="1">
    <location>
        <position position="216"/>
    </location>
</feature>
<feature type="binding site" evidence="1">
    <location>
        <position position="13"/>
    </location>
    <ligand>
        <name>substrate</name>
    </ligand>
</feature>
<feature type="binding site" evidence="1">
    <location>
        <position position="45"/>
    </location>
    <ligand>
        <name>substrate</name>
    </ligand>
</feature>
<feature type="binding site" evidence="1">
    <location>
        <position position="64"/>
    </location>
    <ligand>
        <name>substrate</name>
    </ligand>
</feature>
<feature type="binding site" evidence="1">
    <location>
        <begin position="74"/>
        <end position="75"/>
    </location>
    <ligand>
        <name>substrate</name>
    </ligand>
</feature>
<feature type="binding site" evidence="1">
    <location>
        <position position="155"/>
    </location>
    <ligand>
        <name>substrate</name>
    </ligand>
</feature>
<feature type="binding site" evidence="1">
    <location>
        <position position="189"/>
    </location>
    <ligand>
        <name>substrate</name>
    </ligand>
</feature>
<feature type="binding site" evidence="1">
    <location>
        <begin position="207"/>
        <end position="208"/>
    </location>
    <ligand>
        <name>substrate</name>
    </ligand>
</feature>
<feature type="binding site" evidence="1">
    <location>
        <begin position="217"/>
        <end position="218"/>
    </location>
    <ligand>
        <name>substrate</name>
    </ligand>
</feature>
<feature type="site" description="Could be important to modulate the pK values of the two catalytic cysteine residues" evidence="1">
    <location>
        <position position="157"/>
    </location>
</feature>
<feature type="site" description="Could be important to modulate the pK values of the two catalytic cysteine residues" evidence="1">
    <location>
        <position position="207"/>
    </location>
</feature>
<name>DAPF_BARBK</name>
<reference key="1">
    <citation type="submission" date="2006-12" db="EMBL/GenBank/DDBJ databases">
        <authorList>
            <person name="Hendrix L."/>
            <person name="Mohamoud Y."/>
            <person name="Radune D."/>
            <person name="Shvartsbeyn A."/>
            <person name="Daugherty S."/>
            <person name="Dodson R."/>
            <person name="Durkin A.S."/>
            <person name="Harkins D."/>
            <person name="Huot H."/>
            <person name="Kothari S.P."/>
            <person name="Madupu R."/>
            <person name="Li J."/>
            <person name="Nelson W.C."/>
            <person name="Shrivastava S."/>
            <person name="Giglio M.G."/>
            <person name="Haft D."/>
            <person name="Selengut J."/>
            <person name="Fraser-Ligget C."/>
            <person name="Seshadri R."/>
        </authorList>
    </citation>
    <scope>NUCLEOTIDE SEQUENCE [LARGE SCALE GENOMIC DNA]</scope>
    <source>
        <strain>ATCC 35685 / KC583 / Herrer 020/F12,63</strain>
    </source>
</reference>
<comment type="function">
    <text evidence="1">Catalyzes the stereoinversion of LL-2,6-diaminopimelate (L,L-DAP) to meso-diaminopimelate (meso-DAP), a precursor of L-lysine and an essential component of the bacterial peptidoglycan.</text>
</comment>
<comment type="catalytic activity">
    <reaction evidence="1">
        <text>(2S,6S)-2,6-diaminopimelate = meso-2,6-diaminopimelate</text>
        <dbReference type="Rhea" id="RHEA:15393"/>
        <dbReference type="ChEBI" id="CHEBI:57609"/>
        <dbReference type="ChEBI" id="CHEBI:57791"/>
        <dbReference type="EC" id="5.1.1.7"/>
    </reaction>
</comment>
<comment type="pathway">
    <text evidence="1">Amino-acid biosynthesis; L-lysine biosynthesis via DAP pathway; DL-2,6-diaminopimelate from LL-2,6-diaminopimelate: step 1/1.</text>
</comment>
<comment type="subunit">
    <text evidence="1">Homodimer.</text>
</comment>
<comment type="subcellular location">
    <subcellularLocation>
        <location evidence="1">Cytoplasm</location>
    </subcellularLocation>
</comment>
<comment type="similarity">
    <text evidence="1">Belongs to the diaminopimelate epimerase family.</text>
</comment>
<proteinExistence type="inferred from homology"/>
<protein>
    <recommendedName>
        <fullName evidence="1">Diaminopimelate epimerase</fullName>
        <shortName evidence="1">DAP epimerase</shortName>
        <ecNumber evidence="1">5.1.1.7</ecNumber>
    </recommendedName>
    <alternativeName>
        <fullName evidence="1">PLP-independent amino acid racemase</fullName>
    </alternativeName>
</protein>
<organism>
    <name type="scientific">Bartonella bacilliformis (strain ATCC 35685 / KC583 / Herrer 020/F12,63)</name>
    <dbReference type="NCBI Taxonomy" id="360095"/>
    <lineage>
        <taxon>Bacteria</taxon>
        <taxon>Pseudomonadati</taxon>
        <taxon>Pseudomonadota</taxon>
        <taxon>Alphaproteobacteria</taxon>
        <taxon>Hyphomicrobiales</taxon>
        <taxon>Bartonellaceae</taxon>
        <taxon>Bartonella</taxon>
    </lineage>
</organism>
<gene>
    <name evidence="1" type="primary">dapF</name>
    <name type="ordered locus">BARBAKC583_0019</name>
</gene>
<dbReference type="EC" id="5.1.1.7" evidence="1"/>
<dbReference type="EMBL" id="CP000524">
    <property type="protein sequence ID" value="ABM45151.1"/>
    <property type="molecule type" value="Genomic_DNA"/>
</dbReference>
<dbReference type="RefSeq" id="WP_005765704.1">
    <property type="nucleotide sequence ID" value="NC_008783.1"/>
</dbReference>
<dbReference type="SMR" id="A1UQV5"/>
<dbReference type="STRING" id="360095.BARBAKC583_0019"/>
<dbReference type="GeneID" id="4684357"/>
<dbReference type="KEGG" id="bbk:BARBAKC583_0019"/>
<dbReference type="PATRIC" id="fig|360095.6.peg.19"/>
<dbReference type="eggNOG" id="COG0253">
    <property type="taxonomic scope" value="Bacteria"/>
</dbReference>
<dbReference type="HOGENOM" id="CLU_053306_1_0_5"/>
<dbReference type="OrthoDB" id="9805408at2"/>
<dbReference type="UniPathway" id="UPA00034">
    <property type="reaction ID" value="UER00025"/>
</dbReference>
<dbReference type="Proteomes" id="UP000000643">
    <property type="component" value="Chromosome"/>
</dbReference>
<dbReference type="GO" id="GO:0005829">
    <property type="term" value="C:cytosol"/>
    <property type="evidence" value="ECO:0007669"/>
    <property type="project" value="TreeGrafter"/>
</dbReference>
<dbReference type="GO" id="GO:0008837">
    <property type="term" value="F:diaminopimelate epimerase activity"/>
    <property type="evidence" value="ECO:0007669"/>
    <property type="project" value="UniProtKB-UniRule"/>
</dbReference>
<dbReference type="GO" id="GO:0009089">
    <property type="term" value="P:lysine biosynthetic process via diaminopimelate"/>
    <property type="evidence" value="ECO:0007669"/>
    <property type="project" value="UniProtKB-UniRule"/>
</dbReference>
<dbReference type="Gene3D" id="3.10.310.10">
    <property type="entry name" value="Diaminopimelate Epimerase, Chain A, domain 1"/>
    <property type="match status" value="2"/>
</dbReference>
<dbReference type="HAMAP" id="MF_00197">
    <property type="entry name" value="DAP_epimerase"/>
    <property type="match status" value="1"/>
</dbReference>
<dbReference type="InterPro" id="IPR018510">
    <property type="entry name" value="DAP_epimerase_AS"/>
</dbReference>
<dbReference type="InterPro" id="IPR001653">
    <property type="entry name" value="DAP_epimerase_DapF"/>
</dbReference>
<dbReference type="NCBIfam" id="TIGR00652">
    <property type="entry name" value="DapF"/>
    <property type="match status" value="1"/>
</dbReference>
<dbReference type="PANTHER" id="PTHR31689:SF0">
    <property type="entry name" value="DIAMINOPIMELATE EPIMERASE"/>
    <property type="match status" value="1"/>
</dbReference>
<dbReference type="PANTHER" id="PTHR31689">
    <property type="entry name" value="DIAMINOPIMELATE EPIMERASE, CHLOROPLASTIC"/>
    <property type="match status" value="1"/>
</dbReference>
<dbReference type="Pfam" id="PF01678">
    <property type="entry name" value="DAP_epimerase"/>
    <property type="match status" value="2"/>
</dbReference>
<dbReference type="SUPFAM" id="SSF54506">
    <property type="entry name" value="Diaminopimelate epimerase-like"/>
    <property type="match status" value="2"/>
</dbReference>
<dbReference type="PROSITE" id="PS01326">
    <property type="entry name" value="DAP_EPIMERASE"/>
    <property type="match status" value="1"/>
</dbReference>
<evidence type="ECO:0000255" key="1">
    <source>
        <dbReference type="HAMAP-Rule" id="MF_00197"/>
    </source>
</evidence>